<dbReference type="EMBL" id="AC007519">
    <property type="protein sequence ID" value="AAD46032.1"/>
    <property type="molecule type" value="Genomic_DNA"/>
</dbReference>
<dbReference type="EMBL" id="CP002684">
    <property type="protein sequence ID" value="AEE32184.1"/>
    <property type="molecule type" value="Genomic_DNA"/>
</dbReference>
<dbReference type="PIR" id="H96515">
    <property type="entry name" value="H96515"/>
</dbReference>
<dbReference type="RefSeq" id="NP_175186.2">
    <molecule id="Q9SX85-1"/>
    <property type="nucleotide sequence ID" value="NM_103648.3"/>
</dbReference>
<dbReference type="SMR" id="Q9SX85"/>
<dbReference type="BioGRID" id="26389">
    <property type="interactions" value="4"/>
</dbReference>
<dbReference type="FunCoup" id="Q9SX85">
    <property type="interactions" value="4449"/>
</dbReference>
<dbReference type="IntAct" id="Q9SX85">
    <property type="interactions" value="1"/>
</dbReference>
<dbReference type="STRING" id="3702.Q9SX85"/>
<dbReference type="TCDB" id="1.F.2.1.3">
    <property type="family name" value="the octameric exocyst (exocyst) family"/>
</dbReference>
<dbReference type="iPTMnet" id="Q9SX85"/>
<dbReference type="MetOSite" id="Q9SX85"/>
<dbReference type="PaxDb" id="3702-AT1G47550.2"/>
<dbReference type="ProteomicsDB" id="232874">
    <molecule id="Q9SX85-1"/>
</dbReference>
<dbReference type="EnsemblPlants" id="AT1G47550.1">
    <molecule id="Q9SX85-1"/>
    <property type="protein sequence ID" value="AT1G47550.1"/>
    <property type="gene ID" value="AT1G47550"/>
</dbReference>
<dbReference type="GeneID" id="841164"/>
<dbReference type="Gramene" id="AT1G47550.1">
    <molecule id="Q9SX85-1"/>
    <property type="protein sequence ID" value="AT1G47550.1"/>
    <property type="gene ID" value="AT1G47550"/>
</dbReference>
<dbReference type="KEGG" id="ath:AT1G47550"/>
<dbReference type="Araport" id="AT1G47550"/>
<dbReference type="TAIR" id="AT1G47550">
    <property type="gene designation" value="SEC3A"/>
</dbReference>
<dbReference type="eggNOG" id="KOG2148">
    <property type="taxonomic scope" value="Eukaryota"/>
</dbReference>
<dbReference type="InParanoid" id="Q9SX85"/>
<dbReference type="OMA" id="NQHVMSA"/>
<dbReference type="PhylomeDB" id="Q9SX85"/>
<dbReference type="PRO" id="PR:Q9SX85"/>
<dbReference type="Proteomes" id="UP000006548">
    <property type="component" value="Chromosome 1"/>
</dbReference>
<dbReference type="ExpressionAtlas" id="Q9SX85">
    <property type="expression patterns" value="baseline and differential"/>
</dbReference>
<dbReference type="GO" id="GO:0005856">
    <property type="term" value="C:cytoskeleton"/>
    <property type="evidence" value="ECO:0007669"/>
    <property type="project" value="UniProtKB-KW"/>
</dbReference>
<dbReference type="GO" id="GO:0005829">
    <property type="term" value="C:cytosol"/>
    <property type="evidence" value="ECO:0000314"/>
    <property type="project" value="UniProtKB"/>
</dbReference>
<dbReference type="GO" id="GO:0000145">
    <property type="term" value="C:exocyst"/>
    <property type="evidence" value="ECO:0007669"/>
    <property type="project" value="InterPro"/>
</dbReference>
<dbReference type="GO" id="GO:0070062">
    <property type="term" value="C:extracellular exosome"/>
    <property type="evidence" value="ECO:0000314"/>
    <property type="project" value="UniProtKB"/>
</dbReference>
<dbReference type="GO" id="GO:0009524">
    <property type="term" value="C:phragmoplast"/>
    <property type="evidence" value="ECO:0007669"/>
    <property type="project" value="UniProtKB-SubCell"/>
</dbReference>
<dbReference type="GO" id="GO:0005886">
    <property type="term" value="C:plasma membrane"/>
    <property type="evidence" value="ECO:0007669"/>
    <property type="project" value="UniProtKB-SubCell"/>
</dbReference>
<dbReference type="GO" id="GO:0006887">
    <property type="term" value="P:exocytosis"/>
    <property type="evidence" value="ECO:0007669"/>
    <property type="project" value="UniProtKB-KW"/>
</dbReference>
<dbReference type="InterPro" id="IPR028258">
    <property type="entry name" value="Sec3-PIP2_bind"/>
</dbReference>
<dbReference type="InterPro" id="IPR048628">
    <property type="entry name" value="Sec3_C"/>
</dbReference>
<dbReference type="InterPro" id="IPR019160">
    <property type="entry name" value="Sec3_CC"/>
</dbReference>
<dbReference type="PANTHER" id="PTHR16092:SF14">
    <property type="entry name" value="EXOCYST COMPLEX COMPONENT 1 ISOFORM X1"/>
    <property type="match status" value="1"/>
</dbReference>
<dbReference type="PANTHER" id="PTHR16092">
    <property type="entry name" value="SEC3/SYNTAXIN-RELATED"/>
    <property type="match status" value="1"/>
</dbReference>
<dbReference type="Pfam" id="PF15277">
    <property type="entry name" value="Sec3-PIP2_bind"/>
    <property type="match status" value="1"/>
</dbReference>
<dbReference type="Pfam" id="PF20654">
    <property type="entry name" value="Sec3_C-term"/>
    <property type="match status" value="1"/>
</dbReference>
<dbReference type="Pfam" id="PF09763">
    <property type="entry name" value="Sec3_CC"/>
    <property type="match status" value="1"/>
</dbReference>
<dbReference type="SMART" id="SM01313">
    <property type="entry name" value="Sec3-PIP2_bind"/>
    <property type="match status" value="1"/>
</dbReference>
<accession>Q9SX85</accession>
<name>SEC3A_ARATH</name>
<proteinExistence type="evidence at protein level"/>
<reference key="1">
    <citation type="journal article" date="2000" name="Nature">
        <title>Sequence and analysis of chromosome 1 of the plant Arabidopsis thaliana.</title>
        <authorList>
            <person name="Theologis A."/>
            <person name="Ecker J.R."/>
            <person name="Palm C.J."/>
            <person name="Federspiel N.A."/>
            <person name="Kaul S."/>
            <person name="White O."/>
            <person name="Alonso J."/>
            <person name="Altafi H."/>
            <person name="Araujo R."/>
            <person name="Bowman C.L."/>
            <person name="Brooks S.Y."/>
            <person name="Buehler E."/>
            <person name="Chan A."/>
            <person name="Chao Q."/>
            <person name="Chen H."/>
            <person name="Cheuk R.F."/>
            <person name="Chin C.W."/>
            <person name="Chung M.K."/>
            <person name="Conn L."/>
            <person name="Conway A.B."/>
            <person name="Conway A.R."/>
            <person name="Creasy T.H."/>
            <person name="Dewar K."/>
            <person name="Dunn P."/>
            <person name="Etgu P."/>
            <person name="Feldblyum T.V."/>
            <person name="Feng J.-D."/>
            <person name="Fong B."/>
            <person name="Fujii C.Y."/>
            <person name="Gill J.E."/>
            <person name="Goldsmith A.D."/>
            <person name="Haas B."/>
            <person name="Hansen N.F."/>
            <person name="Hughes B."/>
            <person name="Huizar L."/>
            <person name="Hunter J.L."/>
            <person name="Jenkins J."/>
            <person name="Johnson-Hopson C."/>
            <person name="Khan S."/>
            <person name="Khaykin E."/>
            <person name="Kim C.J."/>
            <person name="Koo H.L."/>
            <person name="Kremenetskaia I."/>
            <person name="Kurtz D.B."/>
            <person name="Kwan A."/>
            <person name="Lam B."/>
            <person name="Langin-Hooper S."/>
            <person name="Lee A."/>
            <person name="Lee J.M."/>
            <person name="Lenz C.A."/>
            <person name="Li J.H."/>
            <person name="Li Y.-P."/>
            <person name="Lin X."/>
            <person name="Liu S.X."/>
            <person name="Liu Z.A."/>
            <person name="Luros J.S."/>
            <person name="Maiti R."/>
            <person name="Marziali A."/>
            <person name="Militscher J."/>
            <person name="Miranda M."/>
            <person name="Nguyen M."/>
            <person name="Nierman W.C."/>
            <person name="Osborne B.I."/>
            <person name="Pai G."/>
            <person name="Peterson J."/>
            <person name="Pham P.K."/>
            <person name="Rizzo M."/>
            <person name="Rooney T."/>
            <person name="Rowley D."/>
            <person name="Sakano H."/>
            <person name="Salzberg S.L."/>
            <person name="Schwartz J.R."/>
            <person name="Shinn P."/>
            <person name="Southwick A.M."/>
            <person name="Sun H."/>
            <person name="Tallon L.J."/>
            <person name="Tambunga G."/>
            <person name="Toriumi M.J."/>
            <person name="Town C.D."/>
            <person name="Utterback T."/>
            <person name="Van Aken S."/>
            <person name="Vaysberg M."/>
            <person name="Vysotskaia V.S."/>
            <person name="Walker M."/>
            <person name="Wu D."/>
            <person name="Yu G."/>
            <person name="Fraser C.M."/>
            <person name="Venter J.C."/>
            <person name="Davis R.W."/>
        </authorList>
    </citation>
    <scope>NUCLEOTIDE SEQUENCE [LARGE SCALE GENOMIC DNA]</scope>
    <source>
        <strain>cv. Columbia</strain>
    </source>
</reference>
<reference key="2">
    <citation type="journal article" date="2017" name="Plant J.">
        <title>Araport11: a complete reannotation of the Arabidopsis thaliana reference genome.</title>
        <authorList>
            <person name="Cheng C.Y."/>
            <person name="Krishnakumar V."/>
            <person name="Chan A.P."/>
            <person name="Thibaud-Nissen F."/>
            <person name="Schobel S."/>
            <person name="Town C.D."/>
        </authorList>
    </citation>
    <scope>GENOME REANNOTATION</scope>
    <source>
        <strain>cv. Columbia</strain>
    </source>
</reference>
<reference key="3">
    <citation type="journal article" date="2007" name="Curr. Biol.">
        <title>A Novel ROP/RAC effector links cell polarity, root-meristem maintenance, and vesicle trafficking.</title>
        <authorList>
            <person name="Lavy M."/>
            <person name="Bloch D."/>
            <person name="Hazak O."/>
            <person name="Gutman I."/>
            <person name="Poraty L."/>
            <person name="Sorek N."/>
            <person name="Sternberg H."/>
            <person name="Yalovsky S."/>
        </authorList>
    </citation>
    <scope>INTERACTION WITH ICR1 AND ICR2</scope>
</reference>
<reference key="4">
    <citation type="journal article" date="2008" name="Plant Cell">
        <title>An exocyst complex functions in plant cell growth in Arabidopsis and tobacco.</title>
        <authorList>
            <person name="Hala M."/>
            <person name="Cole R."/>
            <person name="Synek L."/>
            <person name="Drdova E."/>
            <person name="Pecenkova T."/>
            <person name="Nordheim A."/>
            <person name="Lamkemeyer T."/>
            <person name="Madlung J."/>
            <person name="Hochholdinger F."/>
            <person name="Fowler J.E."/>
            <person name="Zarsky V."/>
        </authorList>
    </citation>
    <scope>COMPONENT OF THE EXOCYST COMPLEX</scope>
    <scope>INTERACTION WITH EXO70A1</scope>
</reference>
<reference key="5">
    <citation type="journal article" date="2010" name="New Phytol.">
        <title>Characterization of the Arabidopsis thaliana exocyst complex gene families by phylogenetic, expression profiling, and subcellular localization studies.</title>
        <authorList>
            <person name="Chong Y.T."/>
            <person name="Gidda S.K."/>
            <person name="Sanford C."/>
            <person name="Parkinson J."/>
            <person name="Mullen R.T."/>
            <person name="Goring D.R."/>
        </authorList>
    </citation>
    <scope>GENE FAMILY</scope>
    <scope>NOMENCLATURE</scope>
</reference>
<reference key="6">
    <citation type="journal article" date="2011" name="J. Exp. Bot.">
        <title>The role for the exocyst complex subunits Exo70B2 and Exo70H1 in the plant-pathogen interaction.</title>
        <authorList>
            <person name="Pecenkova T."/>
            <person name="Hala M."/>
            <person name="Kulich I."/>
            <person name="Kocourkova D."/>
            <person name="Drdova E."/>
            <person name="Fendrych M."/>
            <person name="Toupalova H."/>
            <person name="Zarsky V."/>
        </authorList>
    </citation>
    <scope>INTERACTION WITH EXO70H1</scope>
    <source>
        <strain>cv. Columbia</strain>
    </source>
</reference>
<reference key="7">
    <citation type="journal article" date="2013" name="New Phytol.">
        <title>The Arabidopsis exocyst subunit SEC3A is essential for embryo development and accumulates in transient puncta at the plasma membrane.</title>
        <authorList>
            <person name="Zhang Y."/>
            <person name="Immink R."/>
            <person name="Liu C.M."/>
            <person name="Emons A.M."/>
            <person name="Ketelaar T."/>
        </authorList>
    </citation>
    <scope>FUNCTION</scope>
    <scope>INTERACTION WITH EXO70A1 AND SEC5A</scope>
    <scope>SUBCELLULAR LOCATION</scope>
    <scope>TISSUE SPECIFICITY</scope>
    <scope>DISRUPTION PHENOTYPE</scope>
</reference>
<reference key="8">
    <citation type="journal article" date="2014" name="Mol. Biol. Cell">
        <title>Exo70E2 is essential for exocyst subunit recruitment and EXPO formation in both plants and animals.</title>
        <authorList>
            <person name="Ding Y."/>
            <person name="Wang J."/>
            <person name="Chun Lai J.H."/>
            <person name="Ling Chan V.H."/>
            <person name="Wang X."/>
            <person name="Cai Y."/>
            <person name="Tan X."/>
            <person name="Bao Y."/>
            <person name="Xia J."/>
            <person name="Robinson D.G."/>
            <person name="Jiang L."/>
        </authorList>
    </citation>
    <scope>SUBCELLULAR LOCATION</scope>
    <source>
        <strain>cv. Columbia</strain>
    </source>
</reference>
<reference key="9">
    <citation type="journal article" date="2022" name="J. Integr. Plant Biol.">
        <title>BYPASS1-LIKE regulates lateral root initiation via exocytic vesicular trafficking-mediated PIN recycling in Arabidopsis.</title>
        <authorList>
            <person name="Yang G."/>
            <person name="Chen B.-X."/>
            <person name="Chen T."/>
            <person name="Chen J.-H."/>
            <person name="Lin X.-Y."/>
            <person name="Yue X.-L."/>
            <person name="An L.-Z."/>
            <person name="Zhang H."/>
        </authorList>
    </citation>
    <scope>INTERACTION WITH B1L</scope>
    <source>
        <strain>cv. Columbia</strain>
    </source>
</reference>
<evidence type="ECO:0000255" key="1"/>
<evidence type="ECO:0000256" key="2">
    <source>
        <dbReference type="SAM" id="MobiDB-lite"/>
    </source>
</evidence>
<evidence type="ECO:0000269" key="3">
    <source>
    </source>
</evidence>
<evidence type="ECO:0000269" key="4">
    <source>
    </source>
</evidence>
<evidence type="ECO:0000269" key="5">
    <source>
    </source>
</evidence>
<evidence type="ECO:0000269" key="6">
    <source>
    </source>
</evidence>
<evidence type="ECO:0000269" key="7">
    <source>
    </source>
</evidence>
<evidence type="ECO:0000269" key="8">
    <source>
    </source>
</evidence>
<evidence type="ECO:0000303" key="9">
    <source>
    </source>
</evidence>
<evidence type="ECO:0000305" key="10"/>
<evidence type="ECO:0000305" key="11">
    <source>
    </source>
</evidence>
<evidence type="ECO:0000312" key="12">
    <source>
        <dbReference type="Araport" id="AT1G47550"/>
    </source>
</evidence>
<evidence type="ECO:0000312" key="13">
    <source>
        <dbReference type="EMBL" id="AAD46032.1"/>
    </source>
</evidence>
<comment type="function">
    <text evidence="6">Component of the exocyst complex involved in the docking of exocytic vesicles with fusion sites on the plasma membrane during regulated or polarized secretion. Involved in polarized cell growth and organ morphogenesis. During cytokinesis, involved in cell plate initiation, cell plate maturation and formation of new primary cell wall. During cytokinesis, involved in cell plate initiation, cell plate maturation and formation of new primary cell wall.</text>
</comment>
<comment type="subunit">
    <text evidence="3 4 5 6 8">The exocyst complex is composed of SEC3, SEC5, SEC6, SEC8, SEC10, EXO70A1 and EXO84B. Interacts with EXO70A1, SEC5A and ICR1, but not with ICR2. Binds to EXO70H1 (PubMed:21199889). Binds directly to B1L (PubMed:35249253).</text>
</comment>
<comment type="subcellular location">
    <subcellularLocation>
        <location evidence="6 7">Cytoplasm</location>
        <location evidence="6 7">Cytosol</location>
    </subcellularLocation>
    <subcellularLocation>
        <location evidence="11">Cell membrane</location>
        <topology evidence="11">Peripheral membrane protein</topology>
    </subcellularLocation>
    <subcellularLocation>
        <location evidence="6">Cytoplasm</location>
        <location evidence="6">Cytoskeleton</location>
        <location evidence="6">Phragmoplast</location>
    </subcellularLocation>
    <subcellularLocation>
        <location evidence="7">Secreted</location>
        <location evidence="7">Extracellular exosome</location>
    </subcellularLocation>
    <text evidence="6 7">In interphase, SEC3A localizes to the cytoplasm and plasma membrane, where it forms immobile, punctate structures. Localizes to the early cell plate and completed division wall during cytokinesis (PubMed:23495664). Shuttles from the cytoplasm to the exocyst-positive organelle (EXPO) in the presence of EXO70E2 (PubMed:24307681).</text>
</comment>
<comment type="alternative products">
    <event type="alternative splicing"/>
    <isoform>
        <id>Q9SX85-1</id>
        <name>1</name>
        <sequence type="displayed"/>
    </isoform>
    <text>A number of isoforms are produced. According to EST sequences.</text>
</comment>
<comment type="tissue specificity">
    <text evidence="6">Widely expressed. Preferentially expressed in tissues containing dividing and expanding cells, such as the shoot apical meristem, root tip, lateral root primordia and developing embryos.</text>
</comment>
<comment type="disruption phenotype">
    <text evidence="6">Embryonic lethality.</text>
</comment>
<comment type="similarity">
    <text evidence="10">Belongs to the SEC3 family.</text>
</comment>
<protein>
    <recommendedName>
        <fullName evidence="9">Exocyst complex component SEC3A</fullName>
        <shortName evidence="9">AtSec3a</shortName>
    </recommendedName>
</protein>
<sequence>MAKSSADDEELRRACEAAIEGTKQSIVMSIRVAKSRGVWGKSGKLGRQMAKPRVLALSVKSKGPRKKAFLRVMKYSSGGVLEPAKMYKLKHLSKVEVITNDPSGCTFTLGFDNLRSQSVAPPQWTMRNTDDRNRLLVCILNICKDVLGRLPKVVGIDIVEMALWAKDNTPVVTTQRSTEDGEPVAESVTESDLKVTVEKELVSQAEEEDMEALLGTYVMGIGEAEAFSERLKRELQALEAANVHAILESEPLVDEVLNGLEAATNIVDDMDEWLGIFNIKLRHMREDIESIETRNNKLEMQSVNNKALIEELDKVIERLRVPSEYAASLTGGSFDEADMLQNIEACEWLAKALRGLEVPNLDPIYANMRAVKEKRAELEKLKATFVRRASEFLRNYFASLVDFMVSDKSYFSQRGQLKRPDHADLRYKCRTYARLLQHLKGLDKNCLGPLRKAYCSSLNLLLRREAREFANELRASTKVSRNPTVWLEGSTGSSQNANTDTSAVSDAYAKMLTIFIPLLVDESSFFAHFMCFEVPALAPPGGAGNDKKSQSNNDDGNDDDDLGIMDIDETDKKPGKNSPDLTALNESLQDLLDGIQEDFYAVVDWAYKIDPLRCISMHGITERYLSGQKADAAGFVRLLLGDLESRVSMQFSRFVDEACHQIERNERNVRQMGVLPYIPRFAALATRMEQYIQGQSRDLVDQAYTKFVSIMFVTLEKIAQQDPKYADILLLENYAAFQNSLYDLANVVPTLAKFYHQASEAYEQACTRHISMIIYYQFERLFQFAKKIEDFMYTITPEEIPFQLGLSKVELRKMLKSSLSGVDKSIAAMYKKLQKNLASEELLPSLWDKCKKEFLDKYESFVQLVAKVYPSENVPGVTEMRGLLASM</sequence>
<feature type="chain" id="PRO_0000356305" description="Exocyst complex component SEC3A">
    <location>
        <begin position="1"/>
        <end position="887"/>
    </location>
</feature>
<feature type="region of interest" description="Disordered" evidence="2">
    <location>
        <begin position="542"/>
        <end position="581"/>
    </location>
</feature>
<feature type="coiled-coil region" evidence="1">
    <location>
        <begin position="221"/>
        <end position="248"/>
    </location>
</feature>
<feature type="coiled-coil region" evidence="1">
    <location>
        <begin position="281"/>
        <end position="301"/>
    </location>
</feature>
<feature type="compositionally biased region" description="Acidic residues" evidence="2">
    <location>
        <begin position="555"/>
        <end position="569"/>
    </location>
</feature>
<keyword id="KW-0025">Alternative splicing</keyword>
<keyword id="KW-1003">Cell membrane</keyword>
<keyword id="KW-0175">Coiled coil</keyword>
<keyword id="KW-0963">Cytoplasm</keyword>
<keyword id="KW-0206">Cytoskeleton</keyword>
<keyword id="KW-0268">Exocytosis</keyword>
<keyword id="KW-0472">Membrane</keyword>
<keyword id="KW-1185">Reference proteome</keyword>
<keyword id="KW-0964">Secreted</keyword>
<keyword id="KW-0813">Transport</keyword>
<gene>
    <name evidence="9" type="primary">SEC3A</name>
    <name evidence="12" type="ordered locus">At1g47550</name>
    <name evidence="13" type="ORF">F16N3.18</name>
</gene>
<organism>
    <name type="scientific">Arabidopsis thaliana</name>
    <name type="common">Mouse-ear cress</name>
    <dbReference type="NCBI Taxonomy" id="3702"/>
    <lineage>
        <taxon>Eukaryota</taxon>
        <taxon>Viridiplantae</taxon>
        <taxon>Streptophyta</taxon>
        <taxon>Embryophyta</taxon>
        <taxon>Tracheophyta</taxon>
        <taxon>Spermatophyta</taxon>
        <taxon>Magnoliopsida</taxon>
        <taxon>eudicotyledons</taxon>
        <taxon>Gunneridae</taxon>
        <taxon>Pentapetalae</taxon>
        <taxon>rosids</taxon>
        <taxon>malvids</taxon>
        <taxon>Brassicales</taxon>
        <taxon>Brassicaceae</taxon>
        <taxon>Camelineae</taxon>
        <taxon>Arabidopsis</taxon>
    </lineage>
</organism>